<feature type="chain" id="PRO_0000258554" description="Small ribosomal subunit protein uS10">
    <location>
        <begin position="1"/>
        <end position="102"/>
    </location>
</feature>
<accession>Q1WS89</accession>
<gene>
    <name evidence="1" type="primary">rpsJ</name>
    <name type="ordered locus">LSL_1436</name>
</gene>
<sequence>MAKQKIRIRLKAYEHRILDQSADKIVETAKRTGATISGPIPLPTERTLYTVIRSPHKYKDSREQFEMRTHKRLIDIVNPTPKTVDSLMKLDLPSGVDIEIKL</sequence>
<comment type="function">
    <text evidence="1">Involved in the binding of tRNA to the ribosomes.</text>
</comment>
<comment type="subunit">
    <text evidence="1">Part of the 30S ribosomal subunit.</text>
</comment>
<comment type="similarity">
    <text evidence="1">Belongs to the universal ribosomal protein uS10 family.</text>
</comment>
<keyword id="KW-1185">Reference proteome</keyword>
<keyword id="KW-0687">Ribonucleoprotein</keyword>
<keyword id="KW-0689">Ribosomal protein</keyword>
<organism>
    <name type="scientific">Ligilactobacillus salivarius (strain UCC118)</name>
    <name type="common">Lactobacillus salivarius</name>
    <dbReference type="NCBI Taxonomy" id="362948"/>
    <lineage>
        <taxon>Bacteria</taxon>
        <taxon>Bacillati</taxon>
        <taxon>Bacillota</taxon>
        <taxon>Bacilli</taxon>
        <taxon>Lactobacillales</taxon>
        <taxon>Lactobacillaceae</taxon>
        <taxon>Ligilactobacillus</taxon>
    </lineage>
</organism>
<name>RS10_LIGS1</name>
<proteinExistence type="inferred from homology"/>
<dbReference type="EMBL" id="CP000233">
    <property type="protein sequence ID" value="ABE00240.1"/>
    <property type="molecule type" value="Genomic_DNA"/>
</dbReference>
<dbReference type="RefSeq" id="WP_004563872.1">
    <property type="nucleotide sequence ID" value="NC_007929.1"/>
</dbReference>
<dbReference type="RefSeq" id="YP_536323.1">
    <property type="nucleotide sequence ID" value="NC_007929.1"/>
</dbReference>
<dbReference type="SMR" id="Q1WS89"/>
<dbReference type="STRING" id="362948.LSL_1436"/>
<dbReference type="GeneID" id="89466171"/>
<dbReference type="KEGG" id="lsl:LSL_1436"/>
<dbReference type="PATRIC" id="fig|362948.14.peg.1519"/>
<dbReference type="HOGENOM" id="CLU_122625_1_3_9"/>
<dbReference type="OrthoDB" id="9804464at2"/>
<dbReference type="Proteomes" id="UP000006559">
    <property type="component" value="Chromosome"/>
</dbReference>
<dbReference type="GO" id="GO:1990904">
    <property type="term" value="C:ribonucleoprotein complex"/>
    <property type="evidence" value="ECO:0007669"/>
    <property type="project" value="UniProtKB-KW"/>
</dbReference>
<dbReference type="GO" id="GO:0005840">
    <property type="term" value="C:ribosome"/>
    <property type="evidence" value="ECO:0007669"/>
    <property type="project" value="UniProtKB-KW"/>
</dbReference>
<dbReference type="GO" id="GO:0003735">
    <property type="term" value="F:structural constituent of ribosome"/>
    <property type="evidence" value="ECO:0007669"/>
    <property type="project" value="InterPro"/>
</dbReference>
<dbReference type="GO" id="GO:0000049">
    <property type="term" value="F:tRNA binding"/>
    <property type="evidence" value="ECO:0007669"/>
    <property type="project" value="UniProtKB-UniRule"/>
</dbReference>
<dbReference type="GO" id="GO:0006412">
    <property type="term" value="P:translation"/>
    <property type="evidence" value="ECO:0007669"/>
    <property type="project" value="UniProtKB-UniRule"/>
</dbReference>
<dbReference type="FunFam" id="3.30.70.600:FF:000001">
    <property type="entry name" value="30S ribosomal protein S10"/>
    <property type="match status" value="1"/>
</dbReference>
<dbReference type="Gene3D" id="3.30.70.600">
    <property type="entry name" value="Ribosomal protein S10 domain"/>
    <property type="match status" value="1"/>
</dbReference>
<dbReference type="HAMAP" id="MF_00508">
    <property type="entry name" value="Ribosomal_uS10"/>
    <property type="match status" value="1"/>
</dbReference>
<dbReference type="InterPro" id="IPR001848">
    <property type="entry name" value="Ribosomal_uS10"/>
</dbReference>
<dbReference type="InterPro" id="IPR018268">
    <property type="entry name" value="Ribosomal_uS10_CS"/>
</dbReference>
<dbReference type="InterPro" id="IPR027486">
    <property type="entry name" value="Ribosomal_uS10_dom"/>
</dbReference>
<dbReference type="InterPro" id="IPR036838">
    <property type="entry name" value="Ribosomal_uS10_dom_sf"/>
</dbReference>
<dbReference type="NCBIfam" id="NF001861">
    <property type="entry name" value="PRK00596.1"/>
    <property type="match status" value="1"/>
</dbReference>
<dbReference type="NCBIfam" id="TIGR01049">
    <property type="entry name" value="rpsJ_bact"/>
    <property type="match status" value="1"/>
</dbReference>
<dbReference type="PANTHER" id="PTHR11700">
    <property type="entry name" value="30S RIBOSOMAL PROTEIN S10 FAMILY MEMBER"/>
    <property type="match status" value="1"/>
</dbReference>
<dbReference type="Pfam" id="PF00338">
    <property type="entry name" value="Ribosomal_S10"/>
    <property type="match status" value="1"/>
</dbReference>
<dbReference type="PRINTS" id="PR00971">
    <property type="entry name" value="RIBOSOMALS10"/>
</dbReference>
<dbReference type="SMART" id="SM01403">
    <property type="entry name" value="Ribosomal_S10"/>
    <property type="match status" value="1"/>
</dbReference>
<dbReference type="SUPFAM" id="SSF54999">
    <property type="entry name" value="Ribosomal protein S10"/>
    <property type="match status" value="1"/>
</dbReference>
<dbReference type="PROSITE" id="PS00361">
    <property type="entry name" value="RIBOSOMAL_S10"/>
    <property type="match status" value="1"/>
</dbReference>
<reference key="1">
    <citation type="journal article" date="2006" name="Proc. Natl. Acad. Sci. U.S.A.">
        <title>Multireplicon genome architecture of Lactobacillus salivarius.</title>
        <authorList>
            <person name="Claesson M.J."/>
            <person name="Li Y."/>
            <person name="Leahy S."/>
            <person name="Canchaya C."/>
            <person name="van Pijkeren J.P."/>
            <person name="Cerdeno-Tarraga A.M."/>
            <person name="Parkhill J."/>
            <person name="Flynn S."/>
            <person name="O'Sullivan G.C."/>
            <person name="Collins J.K."/>
            <person name="Higgins D."/>
            <person name="Shanahan F."/>
            <person name="Fitzgerald G.F."/>
            <person name="van Sinderen D."/>
            <person name="O'Toole P.W."/>
        </authorList>
    </citation>
    <scope>NUCLEOTIDE SEQUENCE [LARGE SCALE GENOMIC DNA]</scope>
    <source>
        <strain>UCC118</strain>
    </source>
</reference>
<protein>
    <recommendedName>
        <fullName evidence="1">Small ribosomal subunit protein uS10</fullName>
    </recommendedName>
    <alternativeName>
        <fullName evidence="2">30S ribosomal protein S10</fullName>
    </alternativeName>
</protein>
<evidence type="ECO:0000255" key="1">
    <source>
        <dbReference type="HAMAP-Rule" id="MF_00508"/>
    </source>
</evidence>
<evidence type="ECO:0000305" key="2"/>